<accession>P05488</accession>
<feature type="chain" id="PRO_0000132207" description="Small ribosomal subunit protein uS13m">
    <location>
        <begin position="1"/>
        <end position="116"/>
    </location>
</feature>
<organism>
    <name type="scientific">Nicotiana tabacum</name>
    <name type="common">Common tobacco</name>
    <dbReference type="NCBI Taxonomy" id="4097"/>
    <lineage>
        <taxon>Eukaryota</taxon>
        <taxon>Viridiplantae</taxon>
        <taxon>Streptophyta</taxon>
        <taxon>Embryophyta</taxon>
        <taxon>Tracheophyta</taxon>
        <taxon>Spermatophyta</taxon>
        <taxon>Magnoliopsida</taxon>
        <taxon>eudicotyledons</taxon>
        <taxon>Gunneridae</taxon>
        <taxon>Pentapetalae</taxon>
        <taxon>asterids</taxon>
        <taxon>lamiids</taxon>
        <taxon>Solanales</taxon>
        <taxon>Solanaceae</taxon>
        <taxon>Nicotianoideae</taxon>
        <taxon>Nicotianeae</taxon>
        <taxon>Nicotiana</taxon>
    </lineage>
</organism>
<sequence length="116" mass="13350">MLYISGARLVGDEQVRIASTKIDGIGPKKAIQVRYRLGISGNIKIKELTKYQIDQIEQMIGQDHVVHWELKRGERADIERLISISCYRGIRHQDGSPLRGQRTHTNARTCRKLIRK</sequence>
<geneLocation type="mitochondrion"/>
<name>RT13_TOBAC</name>
<protein>
    <recommendedName>
        <fullName evidence="2">Small ribosomal subunit protein uS13m</fullName>
    </recommendedName>
    <alternativeName>
        <fullName>Ribosomal protein S13, mitochondrial</fullName>
    </alternativeName>
</protein>
<reference key="1">
    <citation type="journal article" date="1986" name="Mol. Gen. Genet.">
        <title>The tobacco mitochondrial ATPase subunit 9 gene is closely linked to an open reading frame for a ribosomal protein.</title>
        <authorList>
            <person name="Bland M.M."/>
            <person name="Levings C.S. III"/>
            <person name="Matzinger D.F."/>
        </authorList>
    </citation>
    <scope>NUCLEOTIDE SEQUENCE [GENOMIC DNA]</scope>
</reference>
<comment type="function">
    <text evidence="1">Located at the top of the head of the small subunit, it contacts several helices of the 18S rRNA.</text>
</comment>
<comment type="subunit">
    <text>Part of the small ribosomal subunit.</text>
</comment>
<comment type="subcellular location">
    <subcellularLocation>
        <location>Mitochondrion</location>
    </subcellularLocation>
</comment>
<comment type="similarity">
    <text evidence="2">Belongs to the universal ribosomal protein uS13 family.</text>
</comment>
<gene>
    <name type="primary">RPS13</name>
</gene>
<evidence type="ECO:0000250" key="1"/>
<evidence type="ECO:0000305" key="2"/>
<dbReference type="EMBL" id="X04019">
    <property type="protein sequence ID" value="CAA27645.1"/>
    <property type="molecule type" value="Genomic_DNA"/>
</dbReference>
<dbReference type="PIR" id="S01847">
    <property type="entry name" value="R3NT13"/>
</dbReference>
<dbReference type="RefSeq" id="YP_173403.1">
    <property type="nucleotide sequence ID" value="NC_006581.1"/>
</dbReference>
<dbReference type="SMR" id="P05488"/>
<dbReference type="GeneID" id="3205230"/>
<dbReference type="KEGG" id="nta:3205230"/>
<dbReference type="OMA" id="THTNARN"/>
<dbReference type="OrthoDB" id="525520at2759"/>
<dbReference type="Proteomes" id="UP000084051">
    <property type="component" value="Mitochondrion MT"/>
</dbReference>
<dbReference type="GO" id="GO:0005739">
    <property type="term" value="C:mitochondrion"/>
    <property type="evidence" value="ECO:0000318"/>
    <property type="project" value="GO_Central"/>
</dbReference>
<dbReference type="GO" id="GO:0015935">
    <property type="term" value="C:small ribosomal subunit"/>
    <property type="evidence" value="ECO:0000318"/>
    <property type="project" value="GO_Central"/>
</dbReference>
<dbReference type="GO" id="GO:0019843">
    <property type="term" value="F:rRNA binding"/>
    <property type="evidence" value="ECO:0007669"/>
    <property type="project" value="UniProtKB-KW"/>
</dbReference>
<dbReference type="GO" id="GO:0003735">
    <property type="term" value="F:structural constituent of ribosome"/>
    <property type="evidence" value="ECO:0007669"/>
    <property type="project" value="InterPro"/>
</dbReference>
<dbReference type="GO" id="GO:0006412">
    <property type="term" value="P:translation"/>
    <property type="evidence" value="ECO:0007669"/>
    <property type="project" value="InterPro"/>
</dbReference>
<dbReference type="FunFam" id="1.10.8.50:FF:000011">
    <property type="entry name" value="Ribosomal protein S13"/>
    <property type="match status" value="1"/>
</dbReference>
<dbReference type="FunFam" id="4.10.910.10:FF:000003">
    <property type="entry name" value="Ribosomal protein S13"/>
    <property type="match status" value="1"/>
</dbReference>
<dbReference type="Gene3D" id="1.10.8.50">
    <property type="match status" value="1"/>
</dbReference>
<dbReference type="Gene3D" id="4.10.910.10">
    <property type="entry name" value="30s ribosomal protein s13, domain 2"/>
    <property type="match status" value="1"/>
</dbReference>
<dbReference type="HAMAP" id="MF_01315">
    <property type="entry name" value="Ribosomal_uS13"/>
    <property type="match status" value="1"/>
</dbReference>
<dbReference type="InterPro" id="IPR027437">
    <property type="entry name" value="Rbsml_uS13_C"/>
</dbReference>
<dbReference type="InterPro" id="IPR001892">
    <property type="entry name" value="Ribosomal_uS13"/>
</dbReference>
<dbReference type="InterPro" id="IPR010979">
    <property type="entry name" value="Ribosomal_uS13-like_H2TH"/>
</dbReference>
<dbReference type="InterPro" id="IPR018269">
    <property type="entry name" value="Ribosomal_uS13_CS"/>
</dbReference>
<dbReference type="PANTHER" id="PTHR10871">
    <property type="entry name" value="30S RIBOSOMAL PROTEIN S13/40S RIBOSOMAL PROTEIN S18"/>
    <property type="match status" value="1"/>
</dbReference>
<dbReference type="PANTHER" id="PTHR10871:SF8">
    <property type="entry name" value="SMALL RIBOSOMAL SUBUNIT PROTEIN US13M"/>
    <property type="match status" value="1"/>
</dbReference>
<dbReference type="Pfam" id="PF00416">
    <property type="entry name" value="Ribosomal_S13"/>
    <property type="match status" value="1"/>
</dbReference>
<dbReference type="PIRSF" id="PIRSF002134">
    <property type="entry name" value="Ribosomal_S13"/>
    <property type="match status" value="1"/>
</dbReference>
<dbReference type="SUPFAM" id="SSF46946">
    <property type="entry name" value="S13-like H2TH domain"/>
    <property type="match status" value="1"/>
</dbReference>
<dbReference type="PROSITE" id="PS00646">
    <property type="entry name" value="RIBOSOMAL_S13_1"/>
    <property type="match status" value="1"/>
</dbReference>
<dbReference type="PROSITE" id="PS50159">
    <property type="entry name" value="RIBOSOMAL_S13_2"/>
    <property type="match status" value="1"/>
</dbReference>
<keyword id="KW-0496">Mitochondrion</keyword>
<keyword id="KW-1185">Reference proteome</keyword>
<keyword id="KW-0687">Ribonucleoprotein</keyword>
<keyword id="KW-0689">Ribosomal protein</keyword>
<keyword id="KW-0694">RNA-binding</keyword>
<keyword id="KW-0699">rRNA-binding</keyword>
<proteinExistence type="inferred from homology"/>